<sequence>MLTKPSALSRLVGELKKLPGVGERTALRLAFHLLKTPQNLTALSESLLEVKSRVRSCSICFAITEDDPCAICAGDRDTGTICVVENSQDLMALERSNAYHGTYHVLEGVISPLAGIGPSELRIAELLARIGRGGVDEVVIATNFTVEGEATALYLAKLLKPLGIRISRLAHGIPLGSDIEYVDAATVQWALQGRNQL</sequence>
<organism>
    <name type="scientific">Pelobacter propionicus (strain DSM 2379 / NBRC 103807 / OttBd1)</name>
    <dbReference type="NCBI Taxonomy" id="338966"/>
    <lineage>
        <taxon>Bacteria</taxon>
        <taxon>Pseudomonadati</taxon>
        <taxon>Thermodesulfobacteriota</taxon>
        <taxon>Desulfuromonadia</taxon>
        <taxon>Desulfuromonadales</taxon>
        <taxon>Desulfuromonadaceae</taxon>
        <taxon>Pelobacter</taxon>
    </lineage>
</organism>
<dbReference type="EMBL" id="CP000482">
    <property type="protein sequence ID" value="ABK97933.1"/>
    <property type="molecule type" value="Genomic_DNA"/>
</dbReference>
<dbReference type="RefSeq" id="WP_011734247.1">
    <property type="nucleotide sequence ID" value="NC_008609.1"/>
</dbReference>
<dbReference type="SMR" id="A1AKR3"/>
<dbReference type="STRING" id="338966.Ppro_0299"/>
<dbReference type="KEGG" id="ppd:Ppro_0299"/>
<dbReference type="eggNOG" id="COG0353">
    <property type="taxonomic scope" value="Bacteria"/>
</dbReference>
<dbReference type="HOGENOM" id="CLU_060739_1_0_7"/>
<dbReference type="OrthoDB" id="9802672at2"/>
<dbReference type="Proteomes" id="UP000006732">
    <property type="component" value="Chromosome"/>
</dbReference>
<dbReference type="GO" id="GO:0003677">
    <property type="term" value="F:DNA binding"/>
    <property type="evidence" value="ECO:0007669"/>
    <property type="project" value="UniProtKB-UniRule"/>
</dbReference>
<dbReference type="GO" id="GO:0008270">
    <property type="term" value="F:zinc ion binding"/>
    <property type="evidence" value="ECO:0007669"/>
    <property type="project" value="UniProtKB-KW"/>
</dbReference>
<dbReference type="GO" id="GO:0006310">
    <property type="term" value="P:DNA recombination"/>
    <property type="evidence" value="ECO:0007669"/>
    <property type="project" value="UniProtKB-UniRule"/>
</dbReference>
<dbReference type="GO" id="GO:0006281">
    <property type="term" value="P:DNA repair"/>
    <property type="evidence" value="ECO:0007669"/>
    <property type="project" value="UniProtKB-UniRule"/>
</dbReference>
<dbReference type="CDD" id="cd01025">
    <property type="entry name" value="TOPRIM_recR"/>
    <property type="match status" value="1"/>
</dbReference>
<dbReference type="Gene3D" id="3.30.60.80">
    <property type="match status" value="1"/>
</dbReference>
<dbReference type="Gene3D" id="3.40.1360.10">
    <property type="match status" value="1"/>
</dbReference>
<dbReference type="Gene3D" id="6.10.250.240">
    <property type="match status" value="1"/>
</dbReference>
<dbReference type="Gene3D" id="1.10.8.420">
    <property type="entry name" value="RecR Domain 1"/>
    <property type="match status" value="1"/>
</dbReference>
<dbReference type="HAMAP" id="MF_00017">
    <property type="entry name" value="RecR"/>
    <property type="match status" value="1"/>
</dbReference>
<dbReference type="InterPro" id="IPR000093">
    <property type="entry name" value="DNA_Rcmb_RecR"/>
</dbReference>
<dbReference type="InterPro" id="IPR023627">
    <property type="entry name" value="Rcmb_RecR"/>
</dbReference>
<dbReference type="InterPro" id="IPR015967">
    <property type="entry name" value="Rcmb_RecR_Znf"/>
</dbReference>
<dbReference type="InterPro" id="IPR006171">
    <property type="entry name" value="TOPRIM_dom"/>
</dbReference>
<dbReference type="InterPro" id="IPR034137">
    <property type="entry name" value="TOPRIM_RecR"/>
</dbReference>
<dbReference type="NCBIfam" id="TIGR00615">
    <property type="entry name" value="recR"/>
    <property type="match status" value="1"/>
</dbReference>
<dbReference type="PANTHER" id="PTHR30446">
    <property type="entry name" value="RECOMBINATION PROTEIN RECR"/>
    <property type="match status" value="1"/>
</dbReference>
<dbReference type="PANTHER" id="PTHR30446:SF0">
    <property type="entry name" value="RECOMBINATION PROTEIN RECR"/>
    <property type="match status" value="1"/>
</dbReference>
<dbReference type="Pfam" id="PF21175">
    <property type="entry name" value="RecR_C"/>
    <property type="match status" value="1"/>
</dbReference>
<dbReference type="Pfam" id="PF21176">
    <property type="entry name" value="RecR_HhH"/>
    <property type="match status" value="1"/>
</dbReference>
<dbReference type="Pfam" id="PF02132">
    <property type="entry name" value="RecR_ZnF"/>
    <property type="match status" value="1"/>
</dbReference>
<dbReference type="Pfam" id="PF13662">
    <property type="entry name" value="Toprim_4"/>
    <property type="match status" value="1"/>
</dbReference>
<dbReference type="SMART" id="SM00493">
    <property type="entry name" value="TOPRIM"/>
    <property type="match status" value="1"/>
</dbReference>
<dbReference type="SUPFAM" id="SSF111304">
    <property type="entry name" value="Recombination protein RecR"/>
    <property type="match status" value="1"/>
</dbReference>
<dbReference type="PROSITE" id="PS50880">
    <property type="entry name" value="TOPRIM"/>
    <property type="match status" value="1"/>
</dbReference>
<proteinExistence type="inferred from homology"/>
<accession>A1AKR3</accession>
<reference key="1">
    <citation type="submission" date="2006-10" db="EMBL/GenBank/DDBJ databases">
        <title>Complete sequence of chromosome of Pelobacter propionicus DSM 2379.</title>
        <authorList>
            <consortium name="US DOE Joint Genome Institute"/>
            <person name="Copeland A."/>
            <person name="Lucas S."/>
            <person name="Lapidus A."/>
            <person name="Barry K."/>
            <person name="Detter J.C."/>
            <person name="Glavina del Rio T."/>
            <person name="Hammon N."/>
            <person name="Israni S."/>
            <person name="Dalin E."/>
            <person name="Tice H."/>
            <person name="Pitluck S."/>
            <person name="Saunders E."/>
            <person name="Brettin T."/>
            <person name="Bruce D."/>
            <person name="Han C."/>
            <person name="Tapia R."/>
            <person name="Schmutz J."/>
            <person name="Larimer F."/>
            <person name="Land M."/>
            <person name="Hauser L."/>
            <person name="Kyrpides N."/>
            <person name="Kim E."/>
            <person name="Lovley D."/>
            <person name="Richardson P."/>
        </authorList>
    </citation>
    <scope>NUCLEOTIDE SEQUENCE [LARGE SCALE GENOMIC DNA]</scope>
    <source>
        <strain>DSM 2379 / NBRC 103807 / OttBd1</strain>
    </source>
</reference>
<keyword id="KW-0227">DNA damage</keyword>
<keyword id="KW-0233">DNA recombination</keyword>
<keyword id="KW-0234">DNA repair</keyword>
<keyword id="KW-0479">Metal-binding</keyword>
<keyword id="KW-1185">Reference proteome</keyword>
<keyword id="KW-0862">Zinc</keyword>
<keyword id="KW-0863">Zinc-finger</keyword>
<protein>
    <recommendedName>
        <fullName evidence="1">Recombination protein RecR</fullName>
    </recommendedName>
</protein>
<feature type="chain" id="PRO_1000001575" description="Recombination protein RecR">
    <location>
        <begin position="1"/>
        <end position="197"/>
    </location>
</feature>
<feature type="domain" description="Toprim" evidence="1">
    <location>
        <begin position="79"/>
        <end position="174"/>
    </location>
</feature>
<feature type="zinc finger region" description="C4-type" evidence="1">
    <location>
        <begin position="57"/>
        <end position="72"/>
    </location>
</feature>
<gene>
    <name evidence="1" type="primary">recR</name>
    <name type="ordered locus">Ppro_0299</name>
</gene>
<comment type="function">
    <text evidence="1">May play a role in DNA repair. It seems to be involved in an RecBC-independent recombinational process of DNA repair. It may act with RecF and RecO.</text>
</comment>
<comment type="similarity">
    <text evidence="1">Belongs to the RecR family.</text>
</comment>
<name>RECR_PELPD</name>
<evidence type="ECO:0000255" key="1">
    <source>
        <dbReference type="HAMAP-Rule" id="MF_00017"/>
    </source>
</evidence>